<keyword id="KW-0998">Cell outer membrane</keyword>
<keyword id="KW-0961">Cell wall biogenesis/degradation</keyword>
<keyword id="KW-0449">Lipoprotein</keyword>
<keyword id="KW-0456">Lyase</keyword>
<keyword id="KW-0472">Membrane</keyword>
<keyword id="KW-0564">Palmitate</keyword>
<keyword id="KW-1185">Reference proteome</keyword>
<keyword id="KW-0732">Signal</keyword>
<accession>Q8XDJ7</accession>
<accession>Q7AEW4</accession>
<protein>
    <recommendedName>
        <fullName evidence="1">Endo-type membrane-bound lytic murein transglycosylase A</fullName>
        <ecNumber evidence="1">4.2.2.n2</ecNumber>
    </recommendedName>
    <alternativeName>
        <fullName evidence="1">Peptidoglycan lytic endotransglycosylase</fullName>
    </alternativeName>
</protein>
<feature type="signal peptide" evidence="1">
    <location>
        <begin position="1"/>
        <end position="15"/>
    </location>
</feature>
<feature type="chain" id="PRO_0000312906" description="Endo-type membrane-bound lytic murein transglycosylase A">
    <location>
        <begin position="16"/>
        <end position="203"/>
    </location>
</feature>
<feature type="lipid moiety-binding region" description="N-palmitoyl cysteine" evidence="1">
    <location>
        <position position="16"/>
    </location>
</feature>
<feature type="lipid moiety-binding region" description="S-diacylglycerol cysteine" evidence="1">
    <location>
        <position position="16"/>
    </location>
</feature>
<proteinExistence type="inferred from homology"/>
<evidence type="ECO:0000255" key="1">
    <source>
        <dbReference type="HAMAP-Rule" id="MF_01381"/>
    </source>
</evidence>
<evidence type="ECO:0000305" key="2"/>
<name>EMTA_ECO57</name>
<dbReference type="EC" id="4.2.2.n2" evidence="1"/>
<dbReference type="EMBL" id="AE005174">
    <property type="protein sequence ID" value="AAG56044.1"/>
    <property type="status" value="ALT_INIT"/>
    <property type="molecule type" value="Genomic_DNA"/>
</dbReference>
<dbReference type="EMBL" id="BA000007">
    <property type="protein sequence ID" value="BAB35110.2"/>
    <property type="molecule type" value="Genomic_DNA"/>
</dbReference>
<dbReference type="PIR" id="H85697">
    <property type="entry name" value="H85697"/>
</dbReference>
<dbReference type="PIR" id="H90839">
    <property type="entry name" value="H90839"/>
</dbReference>
<dbReference type="RefSeq" id="NP_309714.1">
    <property type="nucleotide sequence ID" value="NC_002695.1"/>
</dbReference>
<dbReference type="RefSeq" id="WP_001295616.1">
    <property type="nucleotide sequence ID" value="NZ_VOAI01000042.1"/>
</dbReference>
<dbReference type="SMR" id="Q8XDJ7"/>
<dbReference type="STRING" id="155864.Z1956"/>
<dbReference type="CAZy" id="GH23">
    <property type="family name" value="Glycoside Hydrolase Family 23"/>
</dbReference>
<dbReference type="GeneID" id="75171299"/>
<dbReference type="GeneID" id="913181"/>
<dbReference type="KEGG" id="ece:Z1956"/>
<dbReference type="KEGG" id="ecs:ECs_1688"/>
<dbReference type="PATRIC" id="fig|386585.9.peg.1786"/>
<dbReference type="eggNOG" id="COG0741">
    <property type="taxonomic scope" value="Bacteria"/>
</dbReference>
<dbReference type="HOGENOM" id="CLU_103257_0_0_6"/>
<dbReference type="OMA" id="EVYRYMG"/>
<dbReference type="Proteomes" id="UP000000558">
    <property type="component" value="Chromosome"/>
</dbReference>
<dbReference type="Proteomes" id="UP000002519">
    <property type="component" value="Chromosome"/>
</dbReference>
<dbReference type="GO" id="GO:0009279">
    <property type="term" value="C:cell outer membrane"/>
    <property type="evidence" value="ECO:0007669"/>
    <property type="project" value="UniProtKB-SubCell"/>
</dbReference>
<dbReference type="GO" id="GO:0008932">
    <property type="term" value="F:lytic endotransglycosylase activity"/>
    <property type="evidence" value="ECO:0007669"/>
    <property type="project" value="InterPro"/>
</dbReference>
<dbReference type="GO" id="GO:0016998">
    <property type="term" value="P:cell wall macromolecule catabolic process"/>
    <property type="evidence" value="ECO:0007669"/>
    <property type="project" value="UniProtKB-UniRule"/>
</dbReference>
<dbReference type="GO" id="GO:0071555">
    <property type="term" value="P:cell wall organization"/>
    <property type="evidence" value="ECO:0007669"/>
    <property type="project" value="UniProtKB-KW"/>
</dbReference>
<dbReference type="GO" id="GO:0000270">
    <property type="term" value="P:peptidoglycan metabolic process"/>
    <property type="evidence" value="ECO:0007669"/>
    <property type="project" value="InterPro"/>
</dbReference>
<dbReference type="CDD" id="cd16893">
    <property type="entry name" value="LT_MltC_MltE"/>
    <property type="match status" value="1"/>
</dbReference>
<dbReference type="FunFam" id="1.10.530.10:FF:000007">
    <property type="entry name" value="Endo-type membrane-bound lytic murein transglycosylase A"/>
    <property type="match status" value="1"/>
</dbReference>
<dbReference type="Gene3D" id="1.10.530.10">
    <property type="match status" value="1"/>
</dbReference>
<dbReference type="HAMAP" id="MF_01381">
    <property type="entry name" value="EmtA"/>
    <property type="match status" value="1"/>
</dbReference>
<dbReference type="InterPro" id="IPR023946">
    <property type="entry name" value="EmtA"/>
</dbReference>
<dbReference type="InterPro" id="IPR023346">
    <property type="entry name" value="Lysozyme-like_dom_sf"/>
</dbReference>
<dbReference type="InterPro" id="IPR000189">
    <property type="entry name" value="Transglyc_AS"/>
</dbReference>
<dbReference type="InterPro" id="IPR008258">
    <property type="entry name" value="Transglycosylase_SLT_dom_1"/>
</dbReference>
<dbReference type="NCBIfam" id="NF012014">
    <property type="entry name" value="PRK15470.1"/>
    <property type="match status" value="1"/>
</dbReference>
<dbReference type="PANTHER" id="PTHR37423:SF4">
    <property type="entry name" value="ENDO-TYPE MEMBRANE-BOUND LYTIC MUREIN TRANSGLYCOSYLASE A"/>
    <property type="match status" value="1"/>
</dbReference>
<dbReference type="PANTHER" id="PTHR37423">
    <property type="entry name" value="SOLUBLE LYTIC MUREIN TRANSGLYCOSYLASE-RELATED"/>
    <property type="match status" value="1"/>
</dbReference>
<dbReference type="Pfam" id="PF01464">
    <property type="entry name" value="SLT"/>
    <property type="match status" value="1"/>
</dbReference>
<dbReference type="SUPFAM" id="SSF53955">
    <property type="entry name" value="Lysozyme-like"/>
    <property type="match status" value="1"/>
</dbReference>
<dbReference type="PROSITE" id="PS51257">
    <property type="entry name" value="PROKAR_LIPOPROTEIN"/>
    <property type="match status" value="1"/>
</dbReference>
<dbReference type="PROSITE" id="PS00922">
    <property type="entry name" value="TRANSGLYCOSYLASE"/>
    <property type="match status" value="1"/>
</dbReference>
<sequence>MKLRWFAFLIVLLAGCSSKHDYTNPPWNAKVPVQRAMQWMPISQKAGAAWGVDPQLITAIIAIESGGNPNAVSKSNAIGLMQLKASTSGRDVYRRMGWSGEPTTSELKNPERNISMGAAYLNILETGPLAGIEDPKVLQYALVVSYANGAGALLRTFSSDRKKAISKINDLDADEFLDHVARNHPAPQAPRYIYKLEQALDAM</sequence>
<reference key="1">
    <citation type="journal article" date="2001" name="Nature">
        <title>Genome sequence of enterohaemorrhagic Escherichia coli O157:H7.</title>
        <authorList>
            <person name="Perna N.T."/>
            <person name="Plunkett G. III"/>
            <person name="Burland V."/>
            <person name="Mau B."/>
            <person name="Glasner J.D."/>
            <person name="Rose D.J."/>
            <person name="Mayhew G.F."/>
            <person name="Evans P.S."/>
            <person name="Gregor J."/>
            <person name="Kirkpatrick H.A."/>
            <person name="Posfai G."/>
            <person name="Hackett J."/>
            <person name="Klink S."/>
            <person name="Boutin A."/>
            <person name="Shao Y."/>
            <person name="Miller L."/>
            <person name="Grotbeck E.J."/>
            <person name="Davis N.W."/>
            <person name="Lim A."/>
            <person name="Dimalanta E.T."/>
            <person name="Potamousis K."/>
            <person name="Apodaca J."/>
            <person name="Anantharaman T.S."/>
            <person name="Lin J."/>
            <person name="Yen G."/>
            <person name="Schwartz D.C."/>
            <person name="Welch R.A."/>
            <person name="Blattner F.R."/>
        </authorList>
    </citation>
    <scope>NUCLEOTIDE SEQUENCE [LARGE SCALE GENOMIC DNA]</scope>
    <source>
        <strain>O157:H7 / EDL933 / ATCC 700927 / EHEC</strain>
    </source>
</reference>
<reference key="2">
    <citation type="journal article" date="2001" name="DNA Res.">
        <title>Complete genome sequence of enterohemorrhagic Escherichia coli O157:H7 and genomic comparison with a laboratory strain K-12.</title>
        <authorList>
            <person name="Hayashi T."/>
            <person name="Makino K."/>
            <person name="Ohnishi M."/>
            <person name="Kurokawa K."/>
            <person name="Ishii K."/>
            <person name="Yokoyama K."/>
            <person name="Han C.-G."/>
            <person name="Ohtsubo E."/>
            <person name="Nakayama K."/>
            <person name="Murata T."/>
            <person name="Tanaka M."/>
            <person name="Tobe T."/>
            <person name="Iida T."/>
            <person name="Takami H."/>
            <person name="Honda T."/>
            <person name="Sasakawa C."/>
            <person name="Ogasawara N."/>
            <person name="Yasunaga T."/>
            <person name="Kuhara S."/>
            <person name="Shiba T."/>
            <person name="Hattori M."/>
            <person name="Shinagawa H."/>
        </authorList>
    </citation>
    <scope>NUCLEOTIDE SEQUENCE [LARGE SCALE GENOMIC DNA]</scope>
    <source>
        <strain>O157:H7 / Sakai / RIMD 0509952 / EHEC</strain>
    </source>
</reference>
<organism>
    <name type="scientific">Escherichia coli O157:H7</name>
    <dbReference type="NCBI Taxonomy" id="83334"/>
    <lineage>
        <taxon>Bacteria</taxon>
        <taxon>Pseudomonadati</taxon>
        <taxon>Pseudomonadota</taxon>
        <taxon>Gammaproteobacteria</taxon>
        <taxon>Enterobacterales</taxon>
        <taxon>Enterobacteriaceae</taxon>
        <taxon>Escherichia</taxon>
    </lineage>
</organism>
<gene>
    <name evidence="1" type="primary">emtA</name>
    <name type="synonym">mltE</name>
    <name type="ordered locus">Z1956</name>
    <name type="ordered locus">ECs1688</name>
</gene>
<comment type="function">
    <text evidence="1">Murein-degrading enzyme. May play a role in recycling of muropeptides during cell elongation and/or cell division. Preferentially cleaves at a distance of more than two disaccharide units from the ends of the glycan chain.</text>
</comment>
<comment type="catalytic activity">
    <reaction evidence="1">
        <text>Endolytic cleavage of the (1-&gt;4)-beta-glycosidic linkage between N-acetylmuramic acid (MurNAc) and N-acetylglucosamine (GlcNAc) residues in peptidoglycan with concomitant formation of a 1,6-anhydrobond in the MurNAc residue.</text>
        <dbReference type="EC" id="4.2.2.n2"/>
    </reaction>
</comment>
<comment type="subcellular location">
    <subcellularLocation>
        <location evidence="1">Cell outer membrane</location>
        <topology evidence="1">Lipid-anchor</topology>
    </subcellularLocation>
</comment>
<comment type="similarity">
    <text evidence="1">Belongs to the transglycosylase Slt family.</text>
</comment>
<comment type="sequence caution" evidence="2">
    <conflict type="erroneous initiation">
        <sequence resource="EMBL-CDS" id="AAG56044"/>
    </conflict>
    <text>Extended N-terminus.</text>
</comment>